<gene>
    <name evidence="1" type="primary">rpl14</name>
</gene>
<dbReference type="EMBL" id="X13336">
    <property type="protein sequence ID" value="CAA31717.1"/>
    <property type="molecule type" value="Genomic_DNA"/>
</dbReference>
<dbReference type="EMBL" id="AJ400848">
    <property type="protein sequence ID" value="CAB88764.1"/>
    <property type="molecule type" value="Genomic_DNA"/>
</dbReference>
<dbReference type="PIR" id="S01980">
    <property type="entry name" value="R5SP14"/>
</dbReference>
<dbReference type="RefSeq" id="NP_054971.1">
    <property type="nucleotide sequence ID" value="NC_002202.1"/>
</dbReference>
<dbReference type="PDB" id="4V61">
    <property type="method" value="EM"/>
    <property type="resolution" value="9.40 A"/>
    <property type="chains" value="BM=1-121"/>
</dbReference>
<dbReference type="PDB" id="5H1S">
    <property type="method" value="EM"/>
    <property type="resolution" value="3.50 A"/>
    <property type="chains" value="M=1-121"/>
</dbReference>
<dbReference type="PDB" id="5MLC">
    <property type="method" value="EM"/>
    <property type="resolution" value="3.90 A"/>
    <property type="chains" value="M=1-121"/>
</dbReference>
<dbReference type="PDB" id="5MMI">
    <property type="method" value="EM"/>
    <property type="resolution" value="3.25 A"/>
    <property type="chains" value="L=1-121"/>
</dbReference>
<dbReference type="PDB" id="5MMM">
    <property type="method" value="EM"/>
    <property type="resolution" value="3.40 A"/>
    <property type="chains" value="L=1-121"/>
</dbReference>
<dbReference type="PDB" id="5X8P">
    <property type="method" value="EM"/>
    <property type="resolution" value="3.40 A"/>
    <property type="chains" value="L=1-121"/>
</dbReference>
<dbReference type="PDB" id="5X8T">
    <property type="method" value="EM"/>
    <property type="resolution" value="3.30 A"/>
    <property type="chains" value="L=1-121"/>
</dbReference>
<dbReference type="PDB" id="6ERI">
    <property type="method" value="EM"/>
    <property type="resolution" value="3.00 A"/>
    <property type="chains" value="AK=1-121"/>
</dbReference>
<dbReference type="PDBsum" id="4V61"/>
<dbReference type="PDBsum" id="5H1S"/>
<dbReference type="PDBsum" id="5MLC"/>
<dbReference type="PDBsum" id="5MMI"/>
<dbReference type="PDBsum" id="5MMM"/>
<dbReference type="PDBsum" id="5X8P"/>
<dbReference type="PDBsum" id="5X8T"/>
<dbReference type="PDBsum" id="6ERI"/>
<dbReference type="EMDB" id="EMD-3525"/>
<dbReference type="EMDB" id="EMD-3531"/>
<dbReference type="EMDB" id="EMD-3533"/>
<dbReference type="EMDB" id="EMD-3941"/>
<dbReference type="EMDB" id="EMD-6709"/>
<dbReference type="EMDB" id="EMD-6711"/>
<dbReference type="EMDB" id="EMD-9572"/>
<dbReference type="SMR" id="P09596"/>
<dbReference type="FunCoup" id="P09596">
    <property type="interactions" value="381"/>
</dbReference>
<dbReference type="IntAct" id="P09596">
    <property type="interactions" value="1"/>
</dbReference>
<dbReference type="STRING" id="3562.P09596"/>
<dbReference type="GeneID" id="2715622"/>
<dbReference type="KEGG" id="soe:2715622"/>
<dbReference type="InParanoid" id="P09596"/>
<dbReference type="OrthoDB" id="1850746at2759"/>
<dbReference type="Proteomes" id="UP001155700">
    <property type="component" value="Chloroplast Pltd"/>
</dbReference>
<dbReference type="GO" id="GO:0009507">
    <property type="term" value="C:chloroplast"/>
    <property type="evidence" value="ECO:0007669"/>
    <property type="project" value="UniProtKB-SubCell"/>
</dbReference>
<dbReference type="GO" id="GO:0022625">
    <property type="term" value="C:cytosolic large ribosomal subunit"/>
    <property type="evidence" value="ECO:0000318"/>
    <property type="project" value="GO_Central"/>
</dbReference>
<dbReference type="GO" id="GO:0070180">
    <property type="term" value="F:large ribosomal subunit rRNA binding"/>
    <property type="evidence" value="ECO:0000318"/>
    <property type="project" value="GO_Central"/>
</dbReference>
<dbReference type="GO" id="GO:0003735">
    <property type="term" value="F:structural constituent of ribosome"/>
    <property type="evidence" value="ECO:0000318"/>
    <property type="project" value="GO_Central"/>
</dbReference>
<dbReference type="GO" id="GO:0006412">
    <property type="term" value="P:translation"/>
    <property type="evidence" value="ECO:0007669"/>
    <property type="project" value="UniProtKB-UniRule"/>
</dbReference>
<dbReference type="CDD" id="cd00337">
    <property type="entry name" value="Ribosomal_uL14"/>
    <property type="match status" value="1"/>
</dbReference>
<dbReference type="FunFam" id="2.40.150.20:FF:000002">
    <property type="entry name" value="50S ribosomal protein L14, chloroplastic"/>
    <property type="match status" value="1"/>
</dbReference>
<dbReference type="Gene3D" id="2.40.150.20">
    <property type="entry name" value="Ribosomal protein L14"/>
    <property type="match status" value="1"/>
</dbReference>
<dbReference type="HAMAP" id="MF_01367">
    <property type="entry name" value="Ribosomal_uL14"/>
    <property type="match status" value="1"/>
</dbReference>
<dbReference type="InterPro" id="IPR000218">
    <property type="entry name" value="Ribosomal_uL14"/>
</dbReference>
<dbReference type="InterPro" id="IPR005745">
    <property type="entry name" value="Ribosomal_uL14_bac-type"/>
</dbReference>
<dbReference type="InterPro" id="IPR019972">
    <property type="entry name" value="Ribosomal_uL14_CS"/>
</dbReference>
<dbReference type="InterPro" id="IPR036853">
    <property type="entry name" value="Ribosomal_uL14_sf"/>
</dbReference>
<dbReference type="NCBIfam" id="TIGR01067">
    <property type="entry name" value="rplN_bact"/>
    <property type="match status" value="1"/>
</dbReference>
<dbReference type="PANTHER" id="PTHR11761">
    <property type="entry name" value="50S/60S RIBOSOMAL PROTEIN L14/L23"/>
    <property type="match status" value="1"/>
</dbReference>
<dbReference type="PANTHER" id="PTHR11761:SF3">
    <property type="entry name" value="LARGE RIBOSOMAL SUBUNIT PROTEIN UL14M"/>
    <property type="match status" value="1"/>
</dbReference>
<dbReference type="Pfam" id="PF00238">
    <property type="entry name" value="Ribosomal_L14"/>
    <property type="match status" value="1"/>
</dbReference>
<dbReference type="SMART" id="SM01374">
    <property type="entry name" value="Ribosomal_L14"/>
    <property type="match status" value="1"/>
</dbReference>
<dbReference type="SUPFAM" id="SSF50193">
    <property type="entry name" value="Ribosomal protein L14"/>
    <property type="match status" value="1"/>
</dbReference>
<dbReference type="PROSITE" id="PS00049">
    <property type="entry name" value="RIBOSOMAL_L14"/>
    <property type="match status" value="1"/>
</dbReference>
<name>RK14_SPIOL</name>
<keyword id="KW-0002">3D-structure</keyword>
<keyword id="KW-0150">Chloroplast</keyword>
<keyword id="KW-0903">Direct protein sequencing</keyword>
<keyword id="KW-0934">Plastid</keyword>
<keyword id="KW-1185">Reference proteome</keyword>
<keyword id="KW-0687">Ribonucleoprotein</keyword>
<keyword id="KW-0689">Ribosomal protein</keyword>
<keyword id="KW-0694">RNA-binding</keyword>
<keyword id="KW-0699">rRNA-binding</keyword>
<accession>P09596</accession>
<accession>Q9M3J8</accession>
<organism>
    <name type="scientific">Spinacia oleracea</name>
    <name type="common">Spinach</name>
    <dbReference type="NCBI Taxonomy" id="3562"/>
    <lineage>
        <taxon>Eukaryota</taxon>
        <taxon>Viridiplantae</taxon>
        <taxon>Streptophyta</taxon>
        <taxon>Embryophyta</taxon>
        <taxon>Tracheophyta</taxon>
        <taxon>Spermatophyta</taxon>
        <taxon>Magnoliopsida</taxon>
        <taxon>eudicotyledons</taxon>
        <taxon>Gunneridae</taxon>
        <taxon>Pentapetalae</taxon>
        <taxon>Caryophyllales</taxon>
        <taxon>Chenopodiaceae</taxon>
        <taxon>Chenopodioideae</taxon>
        <taxon>Anserineae</taxon>
        <taxon>Spinacia</taxon>
    </lineage>
</organism>
<protein>
    <recommendedName>
        <fullName evidence="5">Large ribosomal subunit protein uL14c</fullName>
    </recommendedName>
    <alternativeName>
        <fullName evidence="1 4">50S ribosomal protein L14, chloroplastic</fullName>
    </alternativeName>
    <alternativeName>
        <fullName>Ribosomal protein CS-L29</fullName>
    </alternativeName>
</protein>
<comment type="function">
    <text evidence="7 8">Component of the chloroplast ribosome (chloro-ribosome), a dedicated translation machinery responsible for the synthesis of chloroplast genome-encoded proteins, including proteins of the transcription and translation machinery and components of the photosynthetic apparatus.</text>
</comment>
<comment type="subunit">
    <text evidence="2 3">Component of the chloroplast large ribosomal subunit (LSU). Mature 70S chloroplast ribosomes of higher plants consist of a small (30S) and a large (50S) subunit. The 30S small subunit contains 1 molecule of ribosomal RNA (16S rRNA) and 24 different proteins. The 50S large subunit contains 3 rRNA molecules (23S, 5S and 4.5S rRNA) and 33 different proteins.</text>
</comment>
<comment type="subcellular location">
    <subcellularLocation>
        <location evidence="2 3">Plastid</location>
        <location evidence="2 3">Chloroplast</location>
    </subcellularLocation>
</comment>
<comment type="mass spectrometry"/>
<comment type="similarity">
    <text evidence="1">Belongs to the universal ribosomal protein uL14 family.</text>
</comment>
<geneLocation type="chloroplast"/>
<reference key="1">
    <citation type="journal article" date="1989" name="Mol. Gen. Genet.">
        <title>Cotranscription of the S10- and spc-like operons in spinach chloroplasts and identification of three of their gene products.</title>
        <authorList>
            <person name="Zhou D.X."/>
            <person name="Quigley F."/>
            <person name="Massenet O."/>
            <person name="Mache R."/>
        </authorList>
    </citation>
    <scope>NUCLEOTIDE SEQUENCE [GENOMIC DNA]</scope>
    <scope>PROTEIN SEQUENCE OF 1-16</scope>
    <source>
        <tissue>Leaf</tissue>
    </source>
</reference>
<reference key="2">
    <citation type="journal article" date="2001" name="Plant Mol. Biol.">
        <title>The plastid chromosome of spinach (Spinacia oleracea): complete nucleotide sequence and gene organization.</title>
        <authorList>
            <person name="Schmitz-Linneweber C."/>
            <person name="Maier R.M."/>
            <person name="Alcaraz J.-P."/>
            <person name="Cottet A."/>
            <person name="Herrmann R.G."/>
            <person name="Mache R."/>
        </authorList>
    </citation>
    <scope>NUCLEOTIDE SEQUENCE [LARGE SCALE GENOMIC DNA]</scope>
    <source>
        <strain>cv. Geant d'hiver</strain>
        <strain>cv. Monatol</strain>
    </source>
</reference>
<reference key="3">
    <citation type="journal article" date="2000" name="J. Biol. Chem.">
        <title>The plastid ribosomal proteins. Identification of all the proteins in the 50S subunit of an organelle ribosome (chloroplast).</title>
        <authorList>
            <person name="Yamaguchi K."/>
            <person name="Subramanian A.R."/>
        </authorList>
    </citation>
    <scope>PROTEIN SEQUENCE OF 1-10</scope>
    <scope>SUBUNIT</scope>
    <scope>SUBCELLULAR LOCATION</scope>
    <scope>MASS SPECTROMETRY</scope>
    <source>
        <strain>cv. Alwaro</strain>
        <tissue>Leaf</tissue>
    </source>
</reference>
<reference key="4">
    <citation type="journal article" date="2007" name="Proc. Natl. Acad. Sci. U.S.A.">
        <title>Cryo-EM study of the spinach chloroplast ribosome reveals the structural and functional roles of plastid-specific ribosomal proteins.</title>
        <authorList>
            <person name="Sharma M.R."/>
            <person name="Wilson D.N."/>
            <person name="Datta P.P."/>
            <person name="Barat C."/>
            <person name="Schluenzen F."/>
            <person name="Fucini P."/>
            <person name="Agrawal R.K."/>
        </authorList>
    </citation>
    <scope>STRUCTURE BY ELECTRON MICROSCOPY (9.4 ANGSTROMS)</scope>
</reference>
<reference key="5">
    <citation type="journal article" date="2016" name="Sci. Rep.">
        <title>Cryo-EM structure of the large subunit of the spinach chloroplast ribosome.</title>
        <authorList>
            <person name="Ahmed T."/>
            <person name="Yin Z."/>
            <person name="Bhushan S."/>
        </authorList>
    </citation>
    <scope>STRUCTURE BY ELECTRON MICROSCOPY (3.50 ANGSTROMS)</scope>
</reference>
<reference key="6">
    <citation type="journal article" date="2017" name="EMBO J.">
        <title>The complete structure of the chloroplast 70S ribosome in complex with translation factor pY.</title>
        <authorList>
            <person name="Bieri P."/>
            <person name="Leibundgut M."/>
            <person name="Saurer M."/>
            <person name="Boehringer D."/>
            <person name="Ban N."/>
        </authorList>
    </citation>
    <scope>STRUCTURE BY ELECTRON MICROSCOPY (3.25 ANGSTROMS)</scope>
    <scope>SUBUNIT</scope>
    <scope>SUBCELLULAR LOCATION</scope>
</reference>
<evidence type="ECO:0000255" key="1">
    <source>
        <dbReference type="HAMAP-Rule" id="MF_01367"/>
    </source>
</evidence>
<evidence type="ECO:0000269" key="2">
    <source>
    </source>
</evidence>
<evidence type="ECO:0000269" key="3">
    <source>
    </source>
</evidence>
<evidence type="ECO:0000303" key="4">
    <source>
    </source>
</evidence>
<evidence type="ECO:0000303" key="5">
    <source>
    </source>
</evidence>
<evidence type="ECO:0000305" key="6"/>
<evidence type="ECO:0000305" key="7">
    <source>
    </source>
</evidence>
<evidence type="ECO:0000305" key="8">
    <source>
    </source>
</evidence>
<evidence type="ECO:0007829" key="9">
    <source>
        <dbReference type="PDB" id="5MMI"/>
    </source>
</evidence>
<sequence>MIQPQTHLNVADNSGARELMCIRIIGASNRRYARIGDVIVAVIKEAIPNTPLERSEVIRAVVVRTCKELKRDNGMIIRYDDNAAVIIDQEGNPKGTRIFGAIARELRQKFAKIVSLAPEVL</sequence>
<proteinExistence type="evidence at protein level"/>
<feature type="chain" id="PRO_0000128600" description="Large ribosomal subunit protein uL14c">
    <location>
        <begin position="1"/>
        <end position="121"/>
    </location>
</feature>
<feature type="sequence conflict" description="In Ref. 1; AA sequence." evidence="6" ref="1">
    <original>V</original>
    <variation>VV</variation>
    <location>
        <position position="85"/>
    </location>
</feature>
<feature type="strand" evidence="9">
    <location>
        <begin position="7"/>
        <end position="10"/>
    </location>
</feature>
<feature type="strand" evidence="9">
    <location>
        <begin position="15"/>
        <end position="27"/>
    </location>
</feature>
<feature type="strand" evidence="9">
    <location>
        <begin position="38"/>
        <end position="46"/>
    </location>
</feature>
<feature type="strand" evidence="9">
    <location>
        <begin position="48"/>
        <end position="51"/>
    </location>
</feature>
<feature type="strand" evidence="9">
    <location>
        <begin position="57"/>
        <end position="64"/>
    </location>
</feature>
<feature type="strand" evidence="9">
    <location>
        <begin position="72"/>
        <end position="74"/>
    </location>
</feature>
<feature type="strand" evidence="9">
    <location>
        <begin position="76"/>
        <end position="81"/>
    </location>
</feature>
<feature type="strand" evidence="9">
    <location>
        <begin position="83"/>
        <end position="87"/>
    </location>
</feature>
<feature type="strand" evidence="9">
    <location>
        <begin position="93"/>
        <end position="96"/>
    </location>
</feature>
<feature type="strand" evidence="9">
    <location>
        <begin position="100"/>
        <end position="102"/>
    </location>
</feature>
<feature type="helix" evidence="9">
    <location>
        <begin position="104"/>
        <end position="106"/>
    </location>
</feature>
<feature type="turn" evidence="9">
    <location>
        <begin position="107"/>
        <end position="109"/>
    </location>
</feature>
<feature type="helix" evidence="9">
    <location>
        <begin position="111"/>
        <end position="116"/>
    </location>
</feature>
<feature type="strand" evidence="9">
    <location>
        <begin position="118"/>
        <end position="120"/>
    </location>
</feature>